<organism>
    <name type="scientific">Burkholderia ambifaria (strain ATCC BAA-244 / DSM 16087 / CCUG 44356 / LMG 19182 / AMMD)</name>
    <name type="common">Burkholderia cepacia (strain AMMD)</name>
    <dbReference type="NCBI Taxonomy" id="339670"/>
    <lineage>
        <taxon>Bacteria</taxon>
        <taxon>Pseudomonadati</taxon>
        <taxon>Pseudomonadota</taxon>
        <taxon>Betaproteobacteria</taxon>
        <taxon>Burkholderiales</taxon>
        <taxon>Burkholderiaceae</taxon>
        <taxon>Burkholderia</taxon>
        <taxon>Burkholderia cepacia complex</taxon>
    </lineage>
</organism>
<sequence>MKTSMQRKLDQLSTRLAELNDLLSRENVTADLDQYRRLTREHAELGPVVEQYALWRQSRNDETAAQELLADASMRDFAEDEIRSARERMVRLEAELQKMLLPKDPNDDRNIFLEIRAGAGGDESALFAGDLLRMYLRFAERQRWQVEMMSESASDLGGYKEVIVRIAGQGAYSRLKFESGGHRVQRVPATETQGRIHTSACTVAVMPEADEIGEVEINPADLRIDTFRASGAGGQHINKTDSAVRVTHIPTGIVVECQDDRSQHKNKDRALKVLAARIKDKQYHEQHAKEAATRKSLIGSGDRSERIRTYNFPQGRMTDHRINLTLYRLEALMDGDLDELIGALVTEHQAELLASLGDTD</sequence>
<comment type="function">
    <text evidence="1">Peptide chain release factor 1 directs the termination of translation in response to the peptide chain termination codons UAG and UAA.</text>
</comment>
<comment type="subcellular location">
    <subcellularLocation>
        <location evidence="1">Cytoplasm</location>
    </subcellularLocation>
</comment>
<comment type="PTM">
    <text evidence="1">Methylated by PrmC. Methylation increases the termination efficiency of RF1.</text>
</comment>
<comment type="similarity">
    <text evidence="1">Belongs to the prokaryotic/mitochondrial release factor family.</text>
</comment>
<evidence type="ECO:0000255" key="1">
    <source>
        <dbReference type="HAMAP-Rule" id="MF_00093"/>
    </source>
</evidence>
<gene>
    <name evidence="1" type="primary">prfA</name>
    <name type="ordered locus">Bamb_0414</name>
</gene>
<keyword id="KW-0963">Cytoplasm</keyword>
<keyword id="KW-0488">Methylation</keyword>
<keyword id="KW-0648">Protein biosynthesis</keyword>
<protein>
    <recommendedName>
        <fullName evidence="1">Peptide chain release factor 1</fullName>
        <shortName evidence="1">RF-1</shortName>
    </recommendedName>
</protein>
<dbReference type="EMBL" id="CP000440">
    <property type="protein sequence ID" value="ABI85973.1"/>
    <property type="molecule type" value="Genomic_DNA"/>
</dbReference>
<dbReference type="RefSeq" id="WP_006755622.1">
    <property type="nucleotide sequence ID" value="NZ_CP009798.1"/>
</dbReference>
<dbReference type="SMR" id="Q0BIQ0"/>
<dbReference type="GeneID" id="93084174"/>
<dbReference type="KEGG" id="bam:Bamb_0414"/>
<dbReference type="PATRIC" id="fig|339670.21.peg.1199"/>
<dbReference type="eggNOG" id="COG0216">
    <property type="taxonomic scope" value="Bacteria"/>
</dbReference>
<dbReference type="Proteomes" id="UP000000662">
    <property type="component" value="Chromosome 1"/>
</dbReference>
<dbReference type="GO" id="GO:0005737">
    <property type="term" value="C:cytoplasm"/>
    <property type="evidence" value="ECO:0007669"/>
    <property type="project" value="UniProtKB-SubCell"/>
</dbReference>
<dbReference type="GO" id="GO:0016149">
    <property type="term" value="F:translation release factor activity, codon specific"/>
    <property type="evidence" value="ECO:0007669"/>
    <property type="project" value="UniProtKB-UniRule"/>
</dbReference>
<dbReference type="FunFam" id="3.30.160.20:FF:000004">
    <property type="entry name" value="Peptide chain release factor 1"/>
    <property type="match status" value="1"/>
</dbReference>
<dbReference type="FunFam" id="3.30.70.1660:FF:000002">
    <property type="entry name" value="Peptide chain release factor 1"/>
    <property type="match status" value="1"/>
</dbReference>
<dbReference type="FunFam" id="3.30.70.1660:FF:000004">
    <property type="entry name" value="Peptide chain release factor 1"/>
    <property type="match status" value="1"/>
</dbReference>
<dbReference type="Gene3D" id="3.30.160.20">
    <property type="match status" value="1"/>
</dbReference>
<dbReference type="Gene3D" id="3.30.70.1660">
    <property type="match status" value="2"/>
</dbReference>
<dbReference type="Gene3D" id="6.10.140.1950">
    <property type="match status" value="1"/>
</dbReference>
<dbReference type="HAMAP" id="MF_00093">
    <property type="entry name" value="Rel_fac_1"/>
    <property type="match status" value="1"/>
</dbReference>
<dbReference type="InterPro" id="IPR005139">
    <property type="entry name" value="PCRF"/>
</dbReference>
<dbReference type="InterPro" id="IPR000352">
    <property type="entry name" value="Pep_chain_release_fac_I"/>
</dbReference>
<dbReference type="InterPro" id="IPR045853">
    <property type="entry name" value="Pep_chain_release_fac_I_sf"/>
</dbReference>
<dbReference type="InterPro" id="IPR050057">
    <property type="entry name" value="Prokaryotic/Mito_RF"/>
</dbReference>
<dbReference type="InterPro" id="IPR004373">
    <property type="entry name" value="RF-1"/>
</dbReference>
<dbReference type="NCBIfam" id="TIGR00019">
    <property type="entry name" value="prfA"/>
    <property type="match status" value="1"/>
</dbReference>
<dbReference type="NCBIfam" id="NF001859">
    <property type="entry name" value="PRK00591.1"/>
    <property type="match status" value="1"/>
</dbReference>
<dbReference type="PANTHER" id="PTHR43804">
    <property type="entry name" value="LD18447P"/>
    <property type="match status" value="1"/>
</dbReference>
<dbReference type="PANTHER" id="PTHR43804:SF7">
    <property type="entry name" value="LD18447P"/>
    <property type="match status" value="1"/>
</dbReference>
<dbReference type="Pfam" id="PF03462">
    <property type="entry name" value="PCRF"/>
    <property type="match status" value="1"/>
</dbReference>
<dbReference type="Pfam" id="PF00472">
    <property type="entry name" value="RF-1"/>
    <property type="match status" value="1"/>
</dbReference>
<dbReference type="SMART" id="SM00937">
    <property type="entry name" value="PCRF"/>
    <property type="match status" value="1"/>
</dbReference>
<dbReference type="SUPFAM" id="SSF75620">
    <property type="entry name" value="Release factor"/>
    <property type="match status" value="1"/>
</dbReference>
<dbReference type="PROSITE" id="PS00745">
    <property type="entry name" value="RF_PROK_I"/>
    <property type="match status" value="1"/>
</dbReference>
<reference key="1">
    <citation type="submission" date="2006-08" db="EMBL/GenBank/DDBJ databases">
        <title>Complete sequence of chromosome 1 of Burkholderia cepacia AMMD.</title>
        <authorList>
            <person name="Copeland A."/>
            <person name="Lucas S."/>
            <person name="Lapidus A."/>
            <person name="Barry K."/>
            <person name="Detter J.C."/>
            <person name="Glavina del Rio T."/>
            <person name="Hammon N."/>
            <person name="Israni S."/>
            <person name="Pitluck S."/>
            <person name="Bruce D."/>
            <person name="Chain P."/>
            <person name="Malfatti S."/>
            <person name="Shin M."/>
            <person name="Vergez L."/>
            <person name="Schmutz J."/>
            <person name="Larimer F."/>
            <person name="Land M."/>
            <person name="Hauser L."/>
            <person name="Kyrpides N."/>
            <person name="Kim E."/>
            <person name="Parke J."/>
            <person name="Coenye T."/>
            <person name="Konstantinidis K."/>
            <person name="Ramette A."/>
            <person name="Tiedje J."/>
            <person name="Richardson P."/>
        </authorList>
    </citation>
    <scope>NUCLEOTIDE SEQUENCE [LARGE SCALE GENOMIC DNA]</scope>
    <source>
        <strain>ATCC BAA-244 / DSM 16087 / CCUG 44356 / LMG 19182 / AMMD</strain>
    </source>
</reference>
<accession>Q0BIQ0</accession>
<feature type="chain" id="PRO_1000004863" description="Peptide chain release factor 1">
    <location>
        <begin position="1"/>
        <end position="360"/>
    </location>
</feature>
<feature type="modified residue" description="N5-methylglutamine" evidence="1">
    <location>
        <position position="235"/>
    </location>
</feature>
<proteinExistence type="inferred from homology"/>
<name>RF1_BURCM</name>